<sequence length="307" mass="33595">MIYTLTLNPSVDYKIVLKEFQEESLNYALNNNFFAGGKGINVSTVLKNLGKPSTALGFLGGFTGDYIRFSLDSRGIKNDFIKIKYDTRLNIKMIANGRETEINANSPDISENEFELLKNKLKNLANNSTLVMSGSVPAALGEDAYNEIANSISNDVKLIIDTSGKPLRKILRLNPFLIKPNIYELEDLFNAKFDSTKELIKIGKNLVESGVQNIIISMGSDGAIFIGGKNVAFRAFVPKINFVSTIGAGDSVIAGFVYAFDNGSTLEDSFKFGVAAGTATALKGNLCEFQDVKKMLCQIRVEDIYTS</sequence>
<proteinExistence type="inferred from homology"/>
<feature type="chain" id="PRO_0000080075" description="1-phosphofructokinase">
    <location>
        <begin position="1"/>
        <end position="307"/>
    </location>
</feature>
<feature type="active site" description="Proton acceptor" evidence="1">
    <location>
        <position position="250"/>
    </location>
</feature>
<feature type="binding site" evidence="1">
    <location>
        <begin position="217"/>
        <end position="222"/>
    </location>
    <ligand>
        <name>ATP</name>
        <dbReference type="ChEBI" id="CHEBI:30616"/>
    </ligand>
</feature>
<feature type="binding site" evidence="1">
    <location>
        <begin position="249"/>
        <end position="250"/>
    </location>
    <ligand>
        <name>ATP</name>
        <dbReference type="ChEBI" id="CHEBI:30616"/>
    </ligand>
</feature>
<gene>
    <name type="primary">fruK</name>
    <name type="ordered locus">BB_0630</name>
</gene>
<reference key="1">
    <citation type="journal article" date="1997" name="Nature">
        <title>Genomic sequence of a Lyme disease spirochaete, Borrelia burgdorferi.</title>
        <authorList>
            <person name="Fraser C.M."/>
            <person name="Casjens S."/>
            <person name="Huang W.M."/>
            <person name="Sutton G.G."/>
            <person name="Clayton R.A."/>
            <person name="Lathigra R."/>
            <person name="White O."/>
            <person name="Ketchum K.A."/>
            <person name="Dodson R.J."/>
            <person name="Hickey E.K."/>
            <person name="Gwinn M.L."/>
            <person name="Dougherty B.A."/>
            <person name="Tomb J.-F."/>
            <person name="Fleischmann R.D."/>
            <person name="Richardson D.L."/>
            <person name="Peterson J.D."/>
            <person name="Kerlavage A.R."/>
            <person name="Quackenbush J."/>
            <person name="Salzberg S.L."/>
            <person name="Hanson M."/>
            <person name="van Vugt R."/>
            <person name="Palmer N."/>
            <person name="Adams M.D."/>
            <person name="Gocayne J.D."/>
            <person name="Weidman J.F."/>
            <person name="Utterback T.R."/>
            <person name="Watthey L."/>
            <person name="McDonald L.A."/>
            <person name="Artiach P."/>
            <person name="Bowman C."/>
            <person name="Garland S.A."/>
            <person name="Fujii C."/>
            <person name="Cotton M.D."/>
            <person name="Horst K."/>
            <person name="Roberts K.M."/>
            <person name="Hatch B."/>
            <person name="Smith H.O."/>
            <person name="Venter J.C."/>
        </authorList>
    </citation>
    <scope>NUCLEOTIDE SEQUENCE [LARGE SCALE GENOMIC DNA]</scope>
    <source>
        <strain>ATCC 35210 / DSM 4680 / CIP 102532 / B31</strain>
    </source>
</reference>
<comment type="function">
    <text evidence="2">Catalyzes the ATP-dependent phosphorylation of fructose-l-phosphate to fructose-l,6-bisphosphate.</text>
</comment>
<comment type="catalytic activity">
    <reaction evidence="2">
        <text>beta-D-fructose 1-phosphate + ATP = beta-D-fructose 1,6-bisphosphate + ADP + H(+)</text>
        <dbReference type="Rhea" id="RHEA:14213"/>
        <dbReference type="ChEBI" id="CHEBI:15378"/>
        <dbReference type="ChEBI" id="CHEBI:30616"/>
        <dbReference type="ChEBI" id="CHEBI:32966"/>
        <dbReference type="ChEBI" id="CHEBI:138881"/>
        <dbReference type="ChEBI" id="CHEBI:456216"/>
        <dbReference type="EC" id="2.7.1.56"/>
    </reaction>
</comment>
<comment type="similarity">
    <text evidence="3">Belongs to the carbohydrate kinase PfkB family.</text>
</comment>
<accession>O51575</accession>
<evidence type="ECO:0000250" key="1">
    <source>
        <dbReference type="UniProtKB" id="P0A9J6"/>
    </source>
</evidence>
<evidence type="ECO:0000250" key="2">
    <source>
        <dbReference type="UniProtKB" id="P0AEW9"/>
    </source>
</evidence>
<evidence type="ECO:0000305" key="3"/>
<protein>
    <recommendedName>
        <fullName evidence="2">1-phosphofructokinase</fullName>
        <ecNumber evidence="2">2.7.1.56</ecNumber>
    </recommendedName>
    <alternativeName>
        <fullName evidence="2">Fructose 1-phosphate kinase</fullName>
        <shortName evidence="2">Fru1PK</shortName>
    </alternativeName>
</protein>
<dbReference type="EC" id="2.7.1.56" evidence="2"/>
<dbReference type="EMBL" id="AE000783">
    <property type="protein sequence ID" value="AAC66983.1"/>
    <property type="molecule type" value="Genomic_DNA"/>
</dbReference>
<dbReference type="PIR" id="E70178">
    <property type="entry name" value="E70178"/>
</dbReference>
<dbReference type="RefSeq" id="NP_212764.1">
    <property type="nucleotide sequence ID" value="NC_001318.1"/>
</dbReference>
<dbReference type="RefSeq" id="WP_010889784.1">
    <property type="nucleotide sequence ID" value="NC_001318.1"/>
</dbReference>
<dbReference type="SMR" id="O51575"/>
<dbReference type="STRING" id="224326.BB_0630"/>
<dbReference type="PaxDb" id="224326-BB_0630"/>
<dbReference type="DNASU" id="1195481"/>
<dbReference type="EnsemblBacteria" id="AAC66983">
    <property type="protein sequence ID" value="AAC66983"/>
    <property type="gene ID" value="BB_0630"/>
</dbReference>
<dbReference type="KEGG" id="bbu:BB_0630"/>
<dbReference type="PATRIC" id="fig|224326.49.peg.1020"/>
<dbReference type="HOGENOM" id="CLU_050013_1_0_12"/>
<dbReference type="OrthoDB" id="9801219at2"/>
<dbReference type="PHI-base" id="PHI:6527"/>
<dbReference type="Proteomes" id="UP000001807">
    <property type="component" value="Chromosome"/>
</dbReference>
<dbReference type="GO" id="GO:0005829">
    <property type="term" value="C:cytosol"/>
    <property type="evidence" value="ECO:0007669"/>
    <property type="project" value="TreeGrafter"/>
</dbReference>
<dbReference type="GO" id="GO:0008662">
    <property type="term" value="F:1-phosphofructokinase activity"/>
    <property type="evidence" value="ECO:0007669"/>
    <property type="project" value="UniProtKB-EC"/>
</dbReference>
<dbReference type="GO" id="GO:0005524">
    <property type="term" value="F:ATP binding"/>
    <property type="evidence" value="ECO:0007669"/>
    <property type="project" value="UniProtKB-KW"/>
</dbReference>
<dbReference type="CDD" id="cd01164">
    <property type="entry name" value="FruK_PfkB_like"/>
    <property type="match status" value="1"/>
</dbReference>
<dbReference type="FunFam" id="3.40.1190.20:FF:000001">
    <property type="entry name" value="Phosphofructokinase"/>
    <property type="match status" value="1"/>
</dbReference>
<dbReference type="Gene3D" id="3.40.1190.20">
    <property type="match status" value="1"/>
</dbReference>
<dbReference type="InterPro" id="IPR022463">
    <property type="entry name" value="1-PFruKinase"/>
</dbReference>
<dbReference type="InterPro" id="IPR002173">
    <property type="entry name" value="Carboh/pur_kinase_PfkB_CS"/>
</dbReference>
<dbReference type="InterPro" id="IPR011611">
    <property type="entry name" value="PfkB_dom"/>
</dbReference>
<dbReference type="InterPro" id="IPR029056">
    <property type="entry name" value="Ribokinase-like"/>
</dbReference>
<dbReference type="InterPro" id="IPR017583">
    <property type="entry name" value="Tagatose/fructose_Pkinase"/>
</dbReference>
<dbReference type="NCBIfam" id="TIGR03168">
    <property type="entry name" value="1-PFK"/>
    <property type="match status" value="1"/>
</dbReference>
<dbReference type="NCBIfam" id="TIGR03828">
    <property type="entry name" value="pfkB"/>
    <property type="match status" value="1"/>
</dbReference>
<dbReference type="PANTHER" id="PTHR46566:SF1">
    <property type="entry name" value="1-PHOSPHOFRUCTOKINASE"/>
    <property type="match status" value="1"/>
</dbReference>
<dbReference type="PANTHER" id="PTHR46566">
    <property type="entry name" value="1-PHOSPHOFRUCTOKINASE-RELATED"/>
    <property type="match status" value="1"/>
</dbReference>
<dbReference type="Pfam" id="PF00294">
    <property type="entry name" value="PfkB"/>
    <property type="match status" value="1"/>
</dbReference>
<dbReference type="PIRSF" id="PIRSF000535">
    <property type="entry name" value="1PFK/6PFK/LacC"/>
    <property type="match status" value="1"/>
</dbReference>
<dbReference type="SUPFAM" id="SSF53613">
    <property type="entry name" value="Ribokinase-like"/>
    <property type="match status" value="1"/>
</dbReference>
<dbReference type="PROSITE" id="PS00583">
    <property type="entry name" value="PFKB_KINASES_1"/>
    <property type="match status" value="1"/>
</dbReference>
<dbReference type="PROSITE" id="PS00584">
    <property type="entry name" value="PFKB_KINASES_2"/>
    <property type="match status" value="1"/>
</dbReference>
<name>K1PF_BORBU</name>
<organism>
    <name type="scientific">Borreliella burgdorferi (strain ATCC 35210 / DSM 4680 / CIP 102532 / B31)</name>
    <name type="common">Borrelia burgdorferi</name>
    <dbReference type="NCBI Taxonomy" id="224326"/>
    <lineage>
        <taxon>Bacteria</taxon>
        <taxon>Pseudomonadati</taxon>
        <taxon>Spirochaetota</taxon>
        <taxon>Spirochaetia</taxon>
        <taxon>Spirochaetales</taxon>
        <taxon>Borreliaceae</taxon>
        <taxon>Borreliella</taxon>
    </lineage>
</organism>
<keyword id="KW-0067">ATP-binding</keyword>
<keyword id="KW-0418">Kinase</keyword>
<keyword id="KW-0547">Nucleotide-binding</keyword>
<keyword id="KW-1185">Reference proteome</keyword>
<keyword id="KW-0808">Transferase</keyword>